<proteinExistence type="inferred from homology"/>
<comment type="function">
    <text evidence="1">This enzyme scavenges exogenous and endogenous cytidine and 2'-deoxycytidine for UMP synthesis.</text>
</comment>
<comment type="catalytic activity">
    <reaction evidence="1">
        <text>cytidine + H2O + H(+) = uridine + NH4(+)</text>
        <dbReference type="Rhea" id="RHEA:16069"/>
        <dbReference type="ChEBI" id="CHEBI:15377"/>
        <dbReference type="ChEBI" id="CHEBI:15378"/>
        <dbReference type="ChEBI" id="CHEBI:16704"/>
        <dbReference type="ChEBI" id="CHEBI:17562"/>
        <dbReference type="ChEBI" id="CHEBI:28938"/>
        <dbReference type="EC" id="3.5.4.5"/>
    </reaction>
</comment>
<comment type="catalytic activity">
    <reaction evidence="1">
        <text>2'-deoxycytidine + H2O + H(+) = 2'-deoxyuridine + NH4(+)</text>
        <dbReference type="Rhea" id="RHEA:13433"/>
        <dbReference type="ChEBI" id="CHEBI:15377"/>
        <dbReference type="ChEBI" id="CHEBI:15378"/>
        <dbReference type="ChEBI" id="CHEBI:15698"/>
        <dbReference type="ChEBI" id="CHEBI:16450"/>
        <dbReference type="ChEBI" id="CHEBI:28938"/>
        <dbReference type="EC" id="3.5.4.5"/>
    </reaction>
</comment>
<comment type="cofactor">
    <cofactor evidence="1">
        <name>Zn(2+)</name>
        <dbReference type="ChEBI" id="CHEBI:29105"/>
    </cofactor>
    <text evidence="1">Binds 1 zinc ion.</text>
</comment>
<comment type="subunit">
    <text evidence="1">Homodimer.</text>
</comment>
<comment type="similarity">
    <text evidence="1">Belongs to the cytidine and deoxycytidylate deaminase family.</text>
</comment>
<feature type="chain" id="PRO_0000171656" description="Cytidine deaminase">
    <location>
        <begin position="1"/>
        <end position="294"/>
    </location>
</feature>
<feature type="domain" description="CMP/dCMP-type deaminase 1" evidence="2">
    <location>
        <begin position="49"/>
        <end position="169"/>
    </location>
</feature>
<feature type="domain" description="CMP/dCMP-type deaminase 2" evidence="2">
    <location>
        <begin position="188"/>
        <end position="294"/>
    </location>
</feature>
<feature type="active site" description="Proton donor" evidence="1">
    <location>
        <position position="105"/>
    </location>
</feature>
<feature type="binding site" evidence="1">
    <location>
        <begin position="90"/>
        <end position="92"/>
    </location>
    <ligand>
        <name>substrate</name>
    </ligand>
</feature>
<feature type="binding site" evidence="1">
    <location>
        <position position="103"/>
    </location>
    <ligand>
        <name>Zn(2+)</name>
        <dbReference type="ChEBI" id="CHEBI:29105"/>
        <note>catalytic</note>
    </ligand>
</feature>
<feature type="binding site" evidence="1">
    <location>
        <position position="130"/>
    </location>
    <ligand>
        <name>Zn(2+)</name>
        <dbReference type="ChEBI" id="CHEBI:29105"/>
        <note>catalytic</note>
    </ligand>
</feature>
<feature type="binding site" evidence="1">
    <location>
        <position position="133"/>
    </location>
    <ligand>
        <name>Zn(2+)</name>
        <dbReference type="ChEBI" id="CHEBI:29105"/>
        <note>catalytic</note>
    </ligand>
</feature>
<name>CDD_PASMU</name>
<gene>
    <name evidence="1" type="primary">cdd</name>
    <name type="ordered locus">PM0259</name>
</gene>
<reference key="1">
    <citation type="journal article" date="2001" name="Proc. Natl. Acad. Sci. U.S.A.">
        <title>Complete genomic sequence of Pasteurella multocida Pm70.</title>
        <authorList>
            <person name="May B.J."/>
            <person name="Zhang Q."/>
            <person name="Li L.L."/>
            <person name="Paustian M.L."/>
            <person name="Whittam T.S."/>
            <person name="Kapur V."/>
        </authorList>
    </citation>
    <scope>NUCLEOTIDE SEQUENCE [LARGE SCALE GENOMIC DNA]</scope>
    <source>
        <strain>Pm70</strain>
    </source>
</reference>
<accession>Q9CP11</accession>
<evidence type="ECO:0000255" key="1">
    <source>
        <dbReference type="HAMAP-Rule" id="MF_01558"/>
    </source>
</evidence>
<evidence type="ECO:0000255" key="2">
    <source>
        <dbReference type="PROSITE-ProRule" id="PRU01083"/>
    </source>
</evidence>
<protein>
    <recommendedName>
        <fullName evidence="1">Cytidine deaminase</fullName>
        <ecNumber evidence="1">3.5.4.5</ecNumber>
    </recommendedName>
    <alternativeName>
        <fullName evidence="1">Cytidine aminohydrolase</fullName>
        <shortName evidence="1">CDA</shortName>
    </alternativeName>
</protein>
<sequence>MSEKIRKTLSLIESQQLAQDVWHILQEQHFKGMLPYFTVEHLCTKHQLTPQQLALKLLPIAAAYSLAPISQFHVGAIAIGQRGAYYFGANLEFASTHIQQTVHAEQSAISHAWMNHESAITDVVVNYTPCGHCRQFMNELKTAPQLKIHLPHSQNNLLHSYLPDAFGPADLDIQHFLLDAQNNQLTYETQDPVMLTALECANAAHAPYSKSYHGIAIETKDKQIYRGSYAENAAFNPSLPALQVALNHLLLSGDTLQNIQRIVMIEKANHLCYRHMAEDLVANLVDIPLDYIAL</sequence>
<dbReference type="EC" id="3.5.4.5" evidence="1"/>
<dbReference type="EMBL" id="AE004439">
    <property type="protein sequence ID" value="AAK02343.1"/>
    <property type="molecule type" value="Genomic_DNA"/>
</dbReference>
<dbReference type="SMR" id="Q9CP11"/>
<dbReference type="STRING" id="272843.PM0259"/>
<dbReference type="EnsemblBacteria" id="AAK02343">
    <property type="protein sequence ID" value="AAK02343"/>
    <property type="gene ID" value="PM0259"/>
</dbReference>
<dbReference type="KEGG" id="pmu:PM0259"/>
<dbReference type="HOGENOM" id="CLU_052424_0_0_6"/>
<dbReference type="Proteomes" id="UP000000809">
    <property type="component" value="Chromosome"/>
</dbReference>
<dbReference type="GO" id="GO:0005829">
    <property type="term" value="C:cytosol"/>
    <property type="evidence" value="ECO:0007669"/>
    <property type="project" value="TreeGrafter"/>
</dbReference>
<dbReference type="GO" id="GO:0004126">
    <property type="term" value="F:cytidine deaminase activity"/>
    <property type="evidence" value="ECO:0007669"/>
    <property type="project" value="UniProtKB-UniRule"/>
</dbReference>
<dbReference type="GO" id="GO:0042802">
    <property type="term" value="F:identical protein binding"/>
    <property type="evidence" value="ECO:0007669"/>
    <property type="project" value="UniProtKB-ARBA"/>
</dbReference>
<dbReference type="GO" id="GO:0008270">
    <property type="term" value="F:zinc ion binding"/>
    <property type="evidence" value="ECO:0007669"/>
    <property type="project" value="UniProtKB-UniRule"/>
</dbReference>
<dbReference type="GO" id="GO:0009972">
    <property type="term" value="P:cytidine deamination"/>
    <property type="evidence" value="ECO:0007669"/>
    <property type="project" value="InterPro"/>
</dbReference>
<dbReference type="CDD" id="cd01283">
    <property type="entry name" value="cytidine_deaminase"/>
    <property type="match status" value="2"/>
</dbReference>
<dbReference type="FunFam" id="3.40.140.10:FF:000007">
    <property type="entry name" value="Cytidine deaminase"/>
    <property type="match status" value="1"/>
</dbReference>
<dbReference type="Gene3D" id="3.40.140.10">
    <property type="entry name" value="Cytidine Deaminase, domain 2"/>
    <property type="match status" value="2"/>
</dbReference>
<dbReference type="HAMAP" id="MF_01558">
    <property type="entry name" value="Cyt_deam"/>
    <property type="match status" value="1"/>
</dbReference>
<dbReference type="InterPro" id="IPR016192">
    <property type="entry name" value="APOBEC/CMP_deaminase_Zn-bd"/>
</dbReference>
<dbReference type="InterPro" id="IPR002125">
    <property type="entry name" value="CMP_dCMP_dom"/>
</dbReference>
<dbReference type="InterPro" id="IPR013171">
    <property type="entry name" value="Cyd/dCyd_deaminase_Zn-bd"/>
</dbReference>
<dbReference type="InterPro" id="IPR050202">
    <property type="entry name" value="Cyt/Deoxycyt_deaminase"/>
</dbReference>
<dbReference type="InterPro" id="IPR006263">
    <property type="entry name" value="Cyt_deam_dimer"/>
</dbReference>
<dbReference type="InterPro" id="IPR016193">
    <property type="entry name" value="Cytidine_deaminase-like"/>
</dbReference>
<dbReference type="InterPro" id="IPR020797">
    <property type="entry name" value="Cytidine_deaminase_bacteria"/>
</dbReference>
<dbReference type="NCBIfam" id="TIGR01355">
    <property type="entry name" value="cyt_deam_dimer"/>
    <property type="match status" value="1"/>
</dbReference>
<dbReference type="NCBIfam" id="NF006537">
    <property type="entry name" value="PRK09027.1"/>
    <property type="match status" value="1"/>
</dbReference>
<dbReference type="PANTHER" id="PTHR11644">
    <property type="entry name" value="CYTIDINE DEAMINASE"/>
    <property type="match status" value="1"/>
</dbReference>
<dbReference type="PANTHER" id="PTHR11644:SF2">
    <property type="entry name" value="CYTIDINE DEAMINASE"/>
    <property type="match status" value="1"/>
</dbReference>
<dbReference type="Pfam" id="PF00383">
    <property type="entry name" value="dCMP_cyt_deam_1"/>
    <property type="match status" value="1"/>
</dbReference>
<dbReference type="Pfam" id="PF08211">
    <property type="entry name" value="dCMP_cyt_deam_2"/>
    <property type="match status" value="1"/>
</dbReference>
<dbReference type="PIRSF" id="PIRSF006334">
    <property type="entry name" value="Cdd_plus_pseudo"/>
    <property type="match status" value="1"/>
</dbReference>
<dbReference type="SUPFAM" id="SSF53927">
    <property type="entry name" value="Cytidine deaminase-like"/>
    <property type="match status" value="2"/>
</dbReference>
<dbReference type="PROSITE" id="PS00903">
    <property type="entry name" value="CYT_DCMP_DEAMINASES_1"/>
    <property type="match status" value="1"/>
</dbReference>
<dbReference type="PROSITE" id="PS51747">
    <property type="entry name" value="CYT_DCMP_DEAMINASES_2"/>
    <property type="match status" value="2"/>
</dbReference>
<organism>
    <name type="scientific">Pasteurella multocida (strain Pm70)</name>
    <dbReference type="NCBI Taxonomy" id="272843"/>
    <lineage>
        <taxon>Bacteria</taxon>
        <taxon>Pseudomonadati</taxon>
        <taxon>Pseudomonadota</taxon>
        <taxon>Gammaproteobacteria</taxon>
        <taxon>Pasteurellales</taxon>
        <taxon>Pasteurellaceae</taxon>
        <taxon>Pasteurella</taxon>
    </lineage>
</organism>
<keyword id="KW-0378">Hydrolase</keyword>
<keyword id="KW-0479">Metal-binding</keyword>
<keyword id="KW-1185">Reference proteome</keyword>
<keyword id="KW-0862">Zinc</keyword>